<proteinExistence type="inferred from homology"/>
<protein>
    <recommendedName>
        <fullName evidence="1">Photosystem I P700 chlorophyll a apoprotein A2</fullName>
        <ecNumber evidence="1">1.97.1.12</ecNumber>
    </recommendedName>
    <alternativeName>
        <fullName evidence="1">PSI-B</fullName>
    </alternativeName>
    <alternativeName>
        <fullName evidence="1">PsaB</fullName>
    </alternativeName>
</protein>
<reference key="1">
    <citation type="journal article" date="2007" name="Mol. Biol. Evol.">
        <title>The complete chloroplast genome of the chlorarachniophyte Bigelowiella natans: evidence for independent origins of chlorarachniophyte and euglenid secondary endosymbionts.</title>
        <authorList>
            <person name="Rogers M.B."/>
            <person name="Gilson P.R."/>
            <person name="Su V."/>
            <person name="McFadden G.I."/>
            <person name="Keeling P.J."/>
        </authorList>
    </citation>
    <scope>NUCLEOTIDE SEQUENCE [LARGE SCALE GENOMIC DNA]</scope>
</reference>
<name>PSAB_BIGNA</name>
<comment type="function">
    <text evidence="1">PsaA and PsaB bind P700, the primary electron donor of photosystem I (PSI), as well as the electron acceptors A0, A1 and FX. PSI is a plastocyanin/cytochrome c6-ferredoxin oxidoreductase, converting photonic excitation into a charge separation, which transfers an electron from the donor P700 chlorophyll pair to the spectroscopically characterized acceptors A0, A1, FX, FA and FB in turn. Oxidized P700 is reduced on the lumenal side of the thylakoid membrane by plastocyanin or cytochrome c6.</text>
</comment>
<comment type="catalytic activity">
    <reaction evidence="1">
        <text>reduced [plastocyanin] + hnu + oxidized [2Fe-2S]-[ferredoxin] = oxidized [plastocyanin] + reduced [2Fe-2S]-[ferredoxin]</text>
        <dbReference type="Rhea" id="RHEA:30407"/>
        <dbReference type="Rhea" id="RHEA-COMP:10000"/>
        <dbReference type="Rhea" id="RHEA-COMP:10001"/>
        <dbReference type="Rhea" id="RHEA-COMP:10039"/>
        <dbReference type="Rhea" id="RHEA-COMP:10040"/>
        <dbReference type="ChEBI" id="CHEBI:29036"/>
        <dbReference type="ChEBI" id="CHEBI:30212"/>
        <dbReference type="ChEBI" id="CHEBI:33737"/>
        <dbReference type="ChEBI" id="CHEBI:33738"/>
        <dbReference type="ChEBI" id="CHEBI:49552"/>
        <dbReference type="EC" id="1.97.1.12"/>
    </reaction>
</comment>
<comment type="cofactor">
    <text evidence="1">P700 is a chlorophyll a/chlorophyll a' dimer, A0 is one or more chlorophyll a, A1 is one or both phylloquinones and FX is a shared 4Fe-4S iron-sulfur center.</text>
</comment>
<comment type="subunit">
    <text evidence="1">The PsaA/B heterodimer binds the P700 chlorophyll special pair and subsequent electron acceptors. PSI consists of a core antenna complex that captures photons, and an electron transfer chain that converts photonic excitation into a charge separation. The eukaryotic PSI reaction center is composed of at least 11 subunits.</text>
</comment>
<comment type="subcellular location">
    <subcellularLocation>
        <location evidence="1">Plastid</location>
        <location evidence="1">Chloroplast thylakoid membrane</location>
        <topology evidence="1">Multi-pass membrane protein</topology>
    </subcellularLocation>
</comment>
<comment type="similarity">
    <text evidence="1">Belongs to the PsaA/PsaB family.</text>
</comment>
<accession>Q06J40</accession>
<gene>
    <name evidence="1" type="primary">psaB</name>
</gene>
<organism>
    <name type="scientific">Bigelowiella natans</name>
    <name type="common">Pedinomonas minutissima</name>
    <name type="synonym">Chlorarachnion sp. (strain CCMP621)</name>
    <dbReference type="NCBI Taxonomy" id="227086"/>
    <lineage>
        <taxon>Eukaryota</taxon>
        <taxon>Sar</taxon>
        <taxon>Rhizaria</taxon>
        <taxon>Cercozoa</taxon>
        <taxon>Chlorarachniophyceae</taxon>
        <taxon>Bigelowiella</taxon>
    </lineage>
</organism>
<evidence type="ECO:0000255" key="1">
    <source>
        <dbReference type="HAMAP-Rule" id="MF_00482"/>
    </source>
</evidence>
<feature type="chain" id="PRO_0000300057" description="Photosystem I P700 chlorophyll a apoprotein A2">
    <location>
        <begin position="1"/>
        <end position="735"/>
    </location>
</feature>
<feature type="transmembrane region" description="Helical; Name=I" evidence="1">
    <location>
        <begin position="46"/>
        <end position="69"/>
    </location>
</feature>
<feature type="transmembrane region" description="Helical; Name=II" evidence="1">
    <location>
        <begin position="135"/>
        <end position="158"/>
    </location>
</feature>
<feature type="transmembrane region" description="Helical; Name=III" evidence="1">
    <location>
        <begin position="176"/>
        <end position="200"/>
    </location>
</feature>
<feature type="transmembrane region" description="Helical; Name=IV" evidence="1">
    <location>
        <begin position="274"/>
        <end position="292"/>
    </location>
</feature>
<feature type="transmembrane region" description="Helical; Name=V" evidence="1">
    <location>
        <begin position="329"/>
        <end position="352"/>
    </location>
</feature>
<feature type="transmembrane region" description="Helical; Name=VI" evidence="1">
    <location>
        <begin position="368"/>
        <end position="394"/>
    </location>
</feature>
<feature type="transmembrane region" description="Helical; Name=VII" evidence="1">
    <location>
        <begin position="416"/>
        <end position="438"/>
    </location>
</feature>
<feature type="transmembrane region" description="Helical; Name=VIII" evidence="1">
    <location>
        <begin position="521"/>
        <end position="539"/>
    </location>
</feature>
<feature type="transmembrane region" description="Helical; Name=IX" evidence="1">
    <location>
        <begin position="579"/>
        <end position="600"/>
    </location>
</feature>
<feature type="transmembrane region" description="Helical; Name=X" evidence="1">
    <location>
        <begin position="647"/>
        <end position="669"/>
    </location>
</feature>
<feature type="transmembrane region" description="Helical; Name=XI" evidence="1">
    <location>
        <begin position="708"/>
        <end position="728"/>
    </location>
</feature>
<feature type="binding site" evidence="1">
    <location>
        <position position="563"/>
    </location>
    <ligand>
        <name>[4Fe-4S] cluster</name>
        <dbReference type="ChEBI" id="CHEBI:49883"/>
        <note>ligand shared between dimeric partners</note>
    </ligand>
</feature>
<feature type="binding site" evidence="1">
    <location>
        <position position="572"/>
    </location>
    <ligand>
        <name>[4Fe-4S] cluster</name>
        <dbReference type="ChEBI" id="CHEBI:49883"/>
        <note>ligand shared between dimeric partners</note>
    </ligand>
</feature>
<feature type="binding site" description="axial binding residue" evidence="1">
    <location>
        <position position="658"/>
    </location>
    <ligand>
        <name>chlorophyll a</name>
        <dbReference type="ChEBI" id="CHEBI:58416"/>
        <label>B1</label>
    </ligand>
    <ligandPart>
        <name>Mg</name>
        <dbReference type="ChEBI" id="CHEBI:25107"/>
    </ligandPart>
</feature>
<feature type="binding site" description="axial binding residue" evidence="1">
    <location>
        <position position="666"/>
    </location>
    <ligand>
        <name>chlorophyll a</name>
        <dbReference type="ChEBI" id="CHEBI:58416"/>
        <label>B3</label>
    </ligand>
    <ligandPart>
        <name>Mg</name>
        <dbReference type="ChEBI" id="CHEBI:25107"/>
    </ligandPart>
</feature>
<feature type="binding site" evidence="1">
    <location>
        <position position="674"/>
    </location>
    <ligand>
        <name>chlorophyll a</name>
        <dbReference type="ChEBI" id="CHEBI:58416"/>
        <label>B3</label>
    </ligand>
</feature>
<feature type="binding site" evidence="1">
    <location>
        <position position="675"/>
    </location>
    <ligand>
        <name>phylloquinone</name>
        <dbReference type="ChEBI" id="CHEBI:18067"/>
        <label>B</label>
    </ligand>
</feature>
<dbReference type="EC" id="1.97.1.12" evidence="1"/>
<dbReference type="EMBL" id="DQ851108">
    <property type="protein sequence ID" value="ABG91419.1"/>
    <property type="molecule type" value="Genomic_DNA"/>
</dbReference>
<dbReference type="RefSeq" id="YP_778587.1">
    <property type="nucleotide sequence ID" value="NC_008408.1"/>
</dbReference>
<dbReference type="SMR" id="Q06J40"/>
<dbReference type="GeneID" id="4353004"/>
<dbReference type="GO" id="GO:0009535">
    <property type="term" value="C:chloroplast thylakoid membrane"/>
    <property type="evidence" value="ECO:0007669"/>
    <property type="project" value="UniProtKB-SubCell"/>
</dbReference>
<dbReference type="GO" id="GO:0009522">
    <property type="term" value="C:photosystem I"/>
    <property type="evidence" value="ECO:0007669"/>
    <property type="project" value="UniProtKB-KW"/>
</dbReference>
<dbReference type="GO" id="GO:0051539">
    <property type="term" value="F:4 iron, 4 sulfur cluster binding"/>
    <property type="evidence" value="ECO:0007669"/>
    <property type="project" value="UniProtKB-KW"/>
</dbReference>
<dbReference type="GO" id="GO:0016168">
    <property type="term" value="F:chlorophyll binding"/>
    <property type="evidence" value="ECO:0007669"/>
    <property type="project" value="UniProtKB-KW"/>
</dbReference>
<dbReference type="GO" id="GO:0009055">
    <property type="term" value="F:electron transfer activity"/>
    <property type="evidence" value="ECO:0007669"/>
    <property type="project" value="UniProtKB-UniRule"/>
</dbReference>
<dbReference type="GO" id="GO:0000287">
    <property type="term" value="F:magnesium ion binding"/>
    <property type="evidence" value="ECO:0007669"/>
    <property type="project" value="UniProtKB-UniRule"/>
</dbReference>
<dbReference type="GO" id="GO:0016491">
    <property type="term" value="F:oxidoreductase activity"/>
    <property type="evidence" value="ECO:0007669"/>
    <property type="project" value="UniProtKB-KW"/>
</dbReference>
<dbReference type="GO" id="GO:0015979">
    <property type="term" value="P:photosynthesis"/>
    <property type="evidence" value="ECO:0007669"/>
    <property type="project" value="UniProtKB-UniRule"/>
</dbReference>
<dbReference type="FunFam" id="1.20.1130.10:FF:000001">
    <property type="entry name" value="Photosystem I P700 chlorophyll a apoprotein A2"/>
    <property type="match status" value="1"/>
</dbReference>
<dbReference type="Gene3D" id="1.20.1130.10">
    <property type="entry name" value="Photosystem I PsaA/PsaB"/>
    <property type="match status" value="1"/>
</dbReference>
<dbReference type="HAMAP" id="MF_00482">
    <property type="entry name" value="PSI_PsaB"/>
    <property type="match status" value="1"/>
</dbReference>
<dbReference type="InterPro" id="IPR001280">
    <property type="entry name" value="PSI_PsaA/B"/>
</dbReference>
<dbReference type="InterPro" id="IPR020586">
    <property type="entry name" value="PSI_PsaA/B_CS"/>
</dbReference>
<dbReference type="InterPro" id="IPR036408">
    <property type="entry name" value="PSI_PsaA/B_sf"/>
</dbReference>
<dbReference type="InterPro" id="IPR006244">
    <property type="entry name" value="PSI_PsaB"/>
</dbReference>
<dbReference type="NCBIfam" id="TIGR01336">
    <property type="entry name" value="psaB"/>
    <property type="match status" value="1"/>
</dbReference>
<dbReference type="PANTHER" id="PTHR30128">
    <property type="entry name" value="OUTER MEMBRANE PROTEIN, OMPA-RELATED"/>
    <property type="match status" value="1"/>
</dbReference>
<dbReference type="PANTHER" id="PTHR30128:SF19">
    <property type="entry name" value="PHOTOSYSTEM I P700 CHLOROPHYLL A APOPROTEIN A1-RELATED"/>
    <property type="match status" value="1"/>
</dbReference>
<dbReference type="Pfam" id="PF00223">
    <property type="entry name" value="PsaA_PsaB"/>
    <property type="match status" value="1"/>
</dbReference>
<dbReference type="PIRSF" id="PIRSF002905">
    <property type="entry name" value="PSI_A"/>
    <property type="match status" value="1"/>
</dbReference>
<dbReference type="PRINTS" id="PR00257">
    <property type="entry name" value="PHOTSYSPSAAB"/>
</dbReference>
<dbReference type="SUPFAM" id="SSF81558">
    <property type="entry name" value="Photosystem I subunits PsaA/PsaB"/>
    <property type="match status" value="1"/>
</dbReference>
<dbReference type="PROSITE" id="PS00419">
    <property type="entry name" value="PHOTOSYSTEM_I_PSAAB"/>
    <property type="match status" value="1"/>
</dbReference>
<sequence>MKLRLFTSGILGDDKRSMETTQDLWFFRIVHDFFATFEGVSVYQKIFASHFGQIALIFLWASGNLFYVSSQGNFEQWVSDPLHTRPIAHAIWDPQFGQSAVAAYTRAGASGPVTLSTSGLYQWWYTIGMRSNDDLSTASMFLLILSVLFLIAGFIHGYVPLFKPSLAFFKDAESRLNHHLSALFGVSSLAWTGHLIHVAIPESRGQHIRWNNYLSTLPHPDGLAPFFSGNWSAYSTNPDTFNHVFGTSNGAGSAILTFQGGLNPQTGSLWLTDIAHHHLAIAVLFIVAGHMYKTNWSIGHNLQELVEGHNIINGRFNHKGLYQTVNTCLNLQLALALAAVGTICSLVAQHMYSLPAYAYMAQDYVTQAALYTHHQYIAGFIMCGAFAHGTIFLVTEYDPEINADNVLARFLENREVIISHLSWVCLFLGFHTLGLYVHNDVMLAFETPEKQILIEPIFAQYIQAAQGKSSYDFNVLLSSSVSDAYLIPTQSANKGIWLSGWLNSINNNTNSLFIEIGPGDFLVHHAIALGLHTTTLILVKGALDARGSKLMPDKKRFGYGFPCDGPGRGGTCDISAWDAFYLAIFWMLNTIGWVTFYWHWKHLGIWQGNTKQFYESSTYLMGWLRDYLWLNSSQLINGYNPLGMNALSVWSWMFLFGHLIYATGFMFLISWRGYWQELIETLVWAHDRLPIVLWPEKPVALTIVQARFVGLIHFTVGYILTYAAFLIASTSGKFS</sequence>
<geneLocation type="chloroplast"/>
<keyword id="KW-0004">4Fe-4S</keyword>
<keyword id="KW-0148">Chlorophyll</keyword>
<keyword id="KW-0150">Chloroplast</keyword>
<keyword id="KW-0157">Chromophore</keyword>
<keyword id="KW-0249">Electron transport</keyword>
<keyword id="KW-0408">Iron</keyword>
<keyword id="KW-0411">Iron-sulfur</keyword>
<keyword id="KW-0460">Magnesium</keyword>
<keyword id="KW-0472">Membrane</keyword>
<keyword id="KW-0479">Metal-binding</keyword>
<keyword id="KW-0560">Oxidoreductase</keyword>
<keyword id="KW-0602">Photosynthesis</keyword>
<keyword id="KW-0603">Photosystem I</keyword>
<keyword id="KW-0934">Plastid</keyword>
<keyword id="KW-0793">Thylakoid</keyword>
<keyword id="KW-0812">Transmembrane</keyword>
<keyword id="KW-1133">Transmembrane helix</keyword>
<keyword id="KW-0813">Transport</keyword>